<dbReference type="EC" id="1.3.8.7" evidence="2"/>
<dbReference type="EMBL" id="EU009460">
    <property type="protein sequence ID" value="ABS70460.1"/>
    <property type="molecule type" value="mRNA"/>
</dbReference>
<dbReference type="EMBL" id="BC102989">
    <property type="protein sequence ID" value="AAI02990.1"/>
    <property type="molecule type" value="mRNA"/>
</dbReference>
<dbReference type="RefSeq" id="NP_001068703.1">
    <property type="nucleotide sequence ID" value="NM_001075235.1"/>
</dbReference>
<dbReference type="SMR" id="Q3SZB4"/>
<dbReference type="FunCoup" id="Q3SZB4">
    <property type="interactions" value="1147"/>
</dbReference>
<dbReference type="STRING" id="9913.ENSBTAP00000033383"/>
<dbReference type="PaxDb" id="9913-ENSBTAP00000033383"/>
<dbReference type="PeptideAtlas" id="Q3SZB4"/>
<dbReference type="Ensembl" id="ENSBTAT00000033470.6">
    <property type="protein sequence ID" value="ENSBTAP00000033383.4"/>
    <property type="gene ID" value="ENSBTAG00000024240.6"/>
</dbReference>
<dbReference type="GeneID" id="505968"/>
<dbReference type="KEGG" id="bta:505968"/>
<dbReference type="CTD" id="34"/>
<dbReference type="VEuPathDB" id="HostDB:ENSBTAG00000024240"/>
<dbReference type="VGNC" id="VGNC:25524">
    <property type="gene designation" value="ACADM"/>
</dbReference>
<dbReference type="eggNOG" id="KOG0140">
    <property type="taxonomic scope" value="Eukaryota"/>
</dbReference>
<dbReference type="GeneTree" id="ENSGT00940000158429"/>
<dbReference type="HOGENOM" id="CLU_018204_0_2_1"/>
<dbReference type="InParanoid" id="Q3SZB4"/>
<dbReference type="OMA" id="NYDKMGV"/>
<dbReference type="OrthoDB" id="434771at2759"/>
<dbReference type="TreeFam" id="TF105020"/>
<dbReference type="Reactome" id="R-BTA-77288">
    <property type="pathway name" value="mitochondrial fatty acid beta-oxidation of unsaturated fatty acids"/>
</dbReference>
<dbReference type="Reactome" id="R-BTA-77346">
    <property type="pathway name" value="Beta oxidation of decanoyl-CoA to octanoyl-CoA-CoA"/>
</dbReference>
<dbReference type="Reactome" id="R-BTA-77348">
    <property type="pathway name" value="Beta oxidation of octanoyl-CoA to hexanoyl-CoA"/>
</dbReference>
<dbReference type="SABIO-RK" id="Q3SZB4"/>
<dbReference type="UniPathway" id="UPA00660"/>
<dbReference type="Proteomes" id="UP000009136">
    <property type="component" value="Chromosome 3"/>
</dbReference>
<dbReference type="Bgee" id="ENSBTAG00000024240">
    <property type="expression patterns" value="Expressed in metanephros cortex and 103 other cell types or tissues"/>
</dbReference>
<dbReference type="GO" id="GO:0005737">
    <property type="term" value="C:cytoplasm"/>
    <property type="evidence" value="ECO:0000318"/>
    <property type="project" value="GO_Central"/>
</dbReference>
<dbReference type="GO" id="GO:0005759">
    <property type="term" value="C:mitochondrial matrix"/>
    <property type="evidence" value="ECO:0007669"/>
    <property type="project" value="UniProtKB-SubCell"/>
</dbReference>
<dbReference type="GO" id="GO:0005739">
    <property type="term" value="C:mitochondrion"/>
    <property type="evidence" value="ECO:0000318"/>
    <property type="project" value="GO_Central"/>
</dbReference>
<dbReference type="GO" id="GO:0003995">
    <property type="term" value="F:acyl-CoA dehydrogenase activity"/>
    <property type="evidence" value="ECO:0000250"/>
    <property type="project" value="UniProtKB"/>
</dbReference>
<dbReference type="GO" id="GO:0050660">
    <property type="term" value="F:flavin adenine dinucleotide binding"/>
    <property type="evidence" value="ECO:0007669"/>
    <property type="project" value="InterPro"/>
</dbReference>
<dbReference type="GO" id="GO:0070991">
    <property type="term" value="F:medium-chain fatty acyl-CoA dehydrogenase activity"/>
    <property type="evidence" value="ECO:0000318"/>
    <property type="project" value="GO_Central"/>
</dbReference>
<dbReference type="GO" id="GO:0006635">
    <property type="term" value="P:fatty acid beta-oxidation"/>
    <property type="evidence" value="ECO:0000250"/>
    <property type="project" value="UniProtKB"/>
</dbReference>
<dbReference type="GO" id="GO:0033539">
    <property type="term" value="P:fatty acid beta-oxidation using acyl-CoA dehydrogenase"/>
    <property type="evidence" value="ECO:0000250"/>
    <property type="project" value="UniProtKB"/>
</dbReference>
<dbReference type="GO" id="GO:0051793">
    <property type="term" value="P:medium-chain fatty acid catabolic process"/>
    <property type="evidence" value="ECO:0000318"/>
    <property type="project" value="GO_Central"/>
</dbReference>
<dbReference type="CDD" id="cd01157">
    <property type="entry name" value="MCAD"/>
    <property type="match status" value="1"/>
</dbReference>
<dbReference type="FunFam" id="1.10.540.10:FF:000010">
    <property type="entry name" value="Medium-chain specific acyl-CoA dehydrogenase, mitochondrial"/>
    <property type="match status" value="1"/>
</dbReference>
<dbReference type="FunFam" id="1.20.140.10:FF:000011">
    <property type="entry name" value="Medium-chain specific acyl-CoA dehydrogenase, mitochondrial"/>
    <property type="match status" value="1"/>
</dbReference>
<dbReference type="FunFam" id="2.40.110.10:FF:000007">
    <property type="entry name" value="Medium-chain specific acyl-CoA dehydrogenase, mitochondrial"/>
    <property type="match status" value="1"/>
</dbReference>
<dbReference type="Gene3D" id="1.10.540.10">
    <property type="entry name" value="Acyl-CoA dehydrogenase/oxidase, N-terminal domain"/>
    <property type="match status" value="1"/>
</dbReference>
<dbReference type="Gene3D" id="2.40.110.10">
    <property type="entry name" value="Butyryl-CoA Dehydrogenase, subunit A, domain 2"/>
    <property type="match status" value="1"/>
</dbReference>
<dbReference type="Gene3D" id="1.20.140.10">
    <property type="entry name" value="Butyryl-CoA Dehydrogenase, subunit A, domain 3"/>
    <property type="match status" value="1"/>
</dbReference>
<dbReference type="InterPro" id="IPR050741">
    <property type="entry name" value="Acyl-CoA_dehydrogenase"/>
</dbReference>
<dbReference type="InterPro" id="IPR006089">
    <property type="entry name" value="Acyl-CoA_DH_CS"/>
</dbReference>
<dbReference type="InterPro" id="IPR006091">
    <property type="entry name" value="Acyl-CoA_Oxase/DH_mid-dom"/>
</dbReference>
<dbReference type="InterPro" id="IPR046373">
    <property type="entry name" value="Acyl-CoA_Oxase/DH_mid-dom_sf"/>
</dbReference>
<dbReference type="InterPro" id="IPR036250">
    <property type="entry name" value="AcylCo_DH-like_C"/>
</dbReference>
<dbReference type="InterPro" id="IPR009075">
    <property type="entry name" value="AcylCo_DH/oxidase_C"/>
</dbReference>
<dbReference type="InterPro" id="IPR013786">
    <property type="entry name" value="AcylCoA_DH/ox_N"/>
</dbReference>
<dbReference type="InterPro" id="IPR037069">
    <property type="entry name" value="AcylCoA_DH/ox_N_sf"/>
</dbReference>
<dbReference type="InterPro" id="IPR009100">
    <property type="entry name" value="AcylCoA_DH/oxidase_NM_dom_sf"/>
</dbReference>
<dbReference type="InterPro" id="IPR034180">
    <property type="entry name" value="MCAD"/>
</dbReference>
<dbReference type="PANTHER" id="PTHR48083:SF2">
    <property type="entry name" value="MEDIUM-CHAIN SPECIFIC ACYL-COA DEHYDROGENASE, MITOCHONDRIAL"/>
    <property type="match status" value="1"/>
</dbReference>
<dbReference type="PANTHER" id="PTHR48083">
    <property type="entry name" value="MEDIUM-CHAIN SPECIFIC ACYL-COA DEHYDROGENASE, MITOCHONDRIAL-RELATED"/>
    <property type="match status" value="1"/>
</dbReference>
<dbReference type="Pfam" id="PF00441">
    <property type="entry name" value="Acyl-CoA_dh_1"/>
    <property type="match status" value="1"/>
</dbReference>
<dbReference type="Pfam" id="PF02770">
    <property type="entry name" value="Acyl-CoA_dh_M"/>
    <property type="match status" value="1"/>
</dbReference>
<dbReference type="Pfam" id="PF02771">
    <property type="entry name" value="Acyl-CoA_dh_N"/>
    <property type="match status" value="1"/>
</dbReference>
<dbReference type="PIRSF" id="PIRSF016578">
    <property type="entry name" value="HsaA"/>
    <property type="match status" value="1"/>
</dbReference>
<dbReference type="SUPFAM" id="SSF47203">
    <property type="entry name" value="Acyl-CoA dehydrogenase C-terminal domain-like"/>
    <property type="match status" value="1"/>
</dbReference>
<dbReference type="SUPFAM" id="SSF56645">
    <property type="entry name" value="Acyl-CoA dehydrogenase NM domain-like"/>
    <property type="match status" value="1"/>
</dbReference>
<dbReference type="PROSITE" id="PS00072">
    <property type="entry name" value="ACYL_COA_DH_1"/>
    <property type="match status" value="1"/>
</dbReference>
<dbReference type="PROSITE" id="PS00073">
    <property type="entry name" value="ACYL_COA_DH_2"/>
    <property type="match status" value="1"/>
</dbReference>
<reference key="1">
    <citation type="submission" date="2007-07" db="EMBL/GenBank/DDBJ databases">
        <title>Association of bovine ACADM SNP with economic traits.</title>
        <authorList>
            <person name="Li H."/>
            <person name="Xu S."/>
            <person name="Gao X."/>
            <person name="Ren H."/>
            <person name="Li J."/>
        </authorList>
    </citation>
    <scope>NUCLEOTIDE SEQUENCE [MRNA]</scope>
</reference>
<reference key="2">
    <citation type="submission" date="2005-08" db="EMBL/GenBank/DDBJ databases">
        <authorList>
            <consortium name="NIH - Mammalian Gene Collection (MGC) project"/>
        </authorList>
    </citation>
    <scope>NUCLEOTIDE SEQUENCE [LARGE SCALE MRNA]</scope>
    <source>
        <strain>Hereford</strain>
        <tissue>Heart ventricle</tissue>
    </source>
</reference>
<evidence type="ECO:0000250" key="1">
    <source>
        <dbReference type="UniProtKB" id="P08503"/>
    </source>
</evidence>
<evidence type="ECO:0000250" key="2">
    <source>
        <dbReference type="UniProtKB" id="P11310"/>
    </source>
</evidence>
<evidence type="ECO:0000250" key="3">
    <source>
        <dbReference type="UniProtKB" id="P41367"/>
    </source>
</evidence>
<evidence type="ECO:0000250" key="4">
    <source>
        <dbReference type="UniProtKB" id="P45952"/>
    </source>
</evidence>
<evidence type="ECO:0000303" key="5">
    <source ref="1"/>
</evidence>
<evidence type="ECO:0000305" key="6"/>
<proteinExistence type="evidence at transcript level"/>
<sequence>MIALFRRSCGVLRSLSHFDWRSQHTKTALQREPGSGFSFEFTEQQKEFQATARKFAREEIIPLAAEYDKTGEYPVPLIKRAWELGLMNTHIPESCGGLGLGTFDSCLISEELAYGCTGVQTAIEANSLGQMPVIIAGNDQQQKKYLGRMTEEPLMCAYCVTEPVAGSDVAGIKTKAEKKGDEYIINGQKMWITNGGKANWYFLLARSDPDPKAPASKAFTGFIVEADTPGVQIGRKELNMGQRCSDTRGIVFEDVRVPKENVLIGEGAGFKIAMGAFDKTRPPVAAAAVGLAQRALDEATKYALERKTFGKLLIEHQGISFLLAEMAMKVELARLSYQRAAWEVDSGRRNTYYASIAKAYAGDIANQLASDAVQIFGGNGFNTEYPVEKLMRDAKIYQIYEGTAQIQRLIIAREHIGRYKK</sequence>
<keyword id="KW-0007">Acetylation</keyword>
<keyword id="KW-0274">FAD</keyword>
<keyword id="KW-0276">Fatty acid metabolism</keyword>
<keyword id="KW-0285">Flavoprotein</keyword>
<keyword id="KW-0443">Lipid metabolism</keyword>
<keyword id="KW-0496">Mitochondrion</keyword>
<keyword id="KW-0560">Oxidoreductase</keyword>
<keyword id="KW-0597">Phosphoprotein</keyword>
<keyword id="KW-1185">Reference proteome</keyword>
<keyword id="KW-0809">Transit peptide</keyword>
<accession>Q3SZB4</accession>
<accession>A7LFV4</accession>
<organism>
    <name type="scientific">Bos taurus</name>
    <name type="common">Bovine</name>
    <dbReference type="NCBI Taxonomy" id="9913"/>
    <lineage>
        <taxon>Eukaryota</taxon>
        <taxon>Metazoa</taxon>
        <taxon>Chordata</taxon>
        <taxon>Craniata</taxon>
        <taxon>Vertebrata</taxon>
        <taxon>Euteleostomi</taxon>
        <taxon>Mammalia</taxon>
        <taxon>Eutheria</taxon>
        <taxon>Laurasiatheria</taxon>
        <taxon>Artiodactyla</taxon>
        <taxon>Ruminantia</taxon>
        <taxon>Pecora</taxon>
        <taxon>Bovidae</taxon>
        <taxon>Bovinae</taxon>
        <taxon>Bos</taxon>
    </lineage>
</organism>
<name>ACADM_BOVIN</name>
<gene>
    <name evidence="5" type="primary">ACADM</name>
</gene>
<feature type="transit peptide" description="Mitochondrion" evidence="1">
    <location>
        <begin position="1"/>
        <end position="25"/>
    </location>
</feature>
<feature type="chain" id="PRO_0000281995" description="Medium-chain specific acyl-CoA dehydrogenase, mitochondrial">
    <location>
        <begin position="26"/>
        <end position="421"/>
    </location>
</feature>
<feature type="active site" description="Proton acceptor" evidence="3">
    <location>
        <position position="401"/>
    </location>
</feature>
<feature type="binding site" description="in other chain" evidence="3">
    <location>
        <begin position="158"/>
        <end position="167"/>
    </location>
    <ligand>
        <name>FAD</name>
        <dbReference type="ChEBI" id="CHEBI:57692"/>
        <note>ligand shared between dimeric partners</note>
    </ligand>
</feature>
<feature type="binding site" evidence="3">
    <location>
        <position position="167"/>
    </location>
    <ligand>
        <name>octanoyl-CoA</name>
        <dbReference type="ChEBI" id="CHEBI:57386"/>
    </ligand>
</feature>
<feature type="binding site" description="in other chain" evidence="3">
    <location>
        <begin position="191"/>
        <end position="193"/>
    </location>
    <ligand>
        <name>FAD</name>
        <dbReference type="ChEBI" id="CHEBI:57692"/>
        <note>ligand shared between dimeric partners</note>
    </ligand>
</feature>
<feature type="binding site" evidence="3">
    <location>
        <position position="216"/>
    </location>
    <ligand>
        <name>octanoyl-CoA</name>
        <dbReference type="ChEBI" id="CHEBI:57386"/>
    </ligand>
</feature>
<feature type="binding site" evidence="3">
    <location>
        <position position="278"/>
    </location>
    <ligand>
        <name>octanoyl-CoA</name>
        <dbReference type="ChEBI" id="CHEBI:57386"/>
    </ligand>
</feature>
<feature type="binding site" evidence="3">
    <location>
        <position position="281"/>
    </location>
    <ligand>
        <name>octanoyl-CoA</name>
        <dbReference type="ChEBI" id="CHEBI:57386"/>
    </ligand>
</feature>
<feature type="binding site" evidence="3">
    <location>
        <begin position="306"/>
        <end position="308"/>
    </location>
    <ligand>
        <name>FAD</name>
        <dbReference type="ChEBI" id="CHEBI:57692"/>
        <note>ligand shared between dimeric partners</note>
    </ligand>
</feature>
<feature type="binding site" description="in other chain" evidence="3">
    <location>
        <begin position="316"/>
        <end position="317"/>
    </location>
    <ligand>
        <name>FAD</name>
        <dbReference type="ChEBI" id="CHEBI:57692"/>
        <note>ligand shared between dimeric partners</note>
    </ligand>
</feature>
<feature type="binding site" evidence="3">
    <location>
        <position position="349"/>
    </location>
    <ligand>
        <name>octanoyl-CoA</name>
        <dbReference type="ChEBI" id="CHEBI:57386"/>
    </ligand>
</feature>
<feature type="binding site" evidence="3">
    <location>
        <position position="351"/>
    </location>
    <ligand>
        <name>octanoyl-CoA</name>
        <dbReference type="ChEBI" id="CHEBI:57386"/>
    </ligand>
</feature>
<feature type="binding site" evidence="3">
    <location>
        <begin position="374"/>
        <end position="378"/>
    </location>
    <ligand>
        <name>FAD</name>
        <dbReference type="ChEBI" id="CHEBI:57692"/>
        <note>ligand shared between dimeric partners</note>
    </ligand>
</feature>
<feature type="binding site" evidence="3">
    <location>
        <position position="401"/>
    </location>
    <ligand>
        <name>octanoyl-CoA</name>
        <dbReference type="ChEBI" id="CHEBI:57386"/>
    </ligand>
</feature>
<feature type="binding site" description="in other chain" evidence="3">
    <location>
        <begin position="402"/>
        <end position="405"/>
    </location>
    <ligand>
        <name>FAD</name>
        <dbReference type="ChEBI" id="CHEBI:57692"/>
        <note>ligand shared between dimeric partners</note>
    </ligand>
</feature>
<feature type="modified residue" description="N6-acetyllysine; alternate" evidence="4">
    <location>
        <position position="69"/>
    </location>
</feature>
<feature type="modified residue" description="N6-succinyllysine; alternate" evidence="4">
    <location>
        <position position="69"/>
    </location>
</feature>
<feature type="modified residue" description="N6-acetyllysine" evidence="4">
    <location>
        <position position="79"/>
    </location>
</feature>
<feature type="modified residue" description="N6-succinyllysine" evidence="4">
    <location>
        <position position="179"/>
    </location>
</feature>
<feature type="modified residue" description="N6-acetyllysine; alternate" evidence="4">
    <location>
        <position position="212"/>
    </location>
</feature>
<feature type="modified residue" description="N6-succinyllysine; alternate" evidence="4">
    <location>
        <position position="212"/>
    </location>
</feature>
<feature type="modified residue" description="N6-acetyllysine; alternate" evidence="4">
    <location>
        <position position="217"/>
    </location>
</feature>
<feature type="modified residue" description="N6-succinyllysine; alternate" evidence="4">
    <location>
        <position position="217"/>
    </location>
</feature>
<feature type="modified residue" description="N6-acetyllysine; alternate" evidence="4">
    <location>
        <position position="259"/>
    </location>
</feature>
<feature type="modified residue" description="N6-succinyllysine; alternate" evidence="4">
    <location>
        <position position="259"/>
    </location>
</feature>
<feature type="modified residue" description="N6-acetyllysine; alternate" evidence="4">
    <location>
        <position position="271"/>
    </location>
</feature>
<feature type="modified residue" description="N6-succinyllysine; alternate" evidence="4">
    <location>
        <position position="271"/>
    </location>
</feature>
<feature type="modified residue" description="N6-acetyllysine" evidence="2">
    <location>
        <position position="279"/>
    </location>
</feature>
<feature type="modified residue" description="N6-acetyllysine" evidence="2">
    <location>
        <position position="301"/>
    </location>
</feature>
<feature type="modified residue" description="Phosphothreonine" evidence="4">
    <location>
        <position position="351"/>
    </location>
</feature>
<protein>
    <recommendedName>
        <fullName evidence="6">Medium-chain specific acyl-CoA dehydrogenase, mitochondrial</fullName>
        <shortName evidence="6">MCAD</shortName>
        <ecNumber evidence="2">1.3.8.7</ecNumber>
    </recommendedName>
</protein>
<comment type="function">
    <text evidence="2">Medium-chain specific acyl-CoA dehydrogenase is one of the acyl-CoA dehydrogenases that catalyze the first step of mitochondrial fatty acid beta-oxidation, an aerobic process breaking down fatty acids into acetyl-CoA and allowing the production of energy from fats. The first step of fatty acid beta-oxidation consists in the removal of one hydrogen from C-2 and C-3 of the straight-chain fatty acyl-CoA thioester, resulting in the formation of trans-2-enoyl-CoA. Electron transfer flavoprotein (ETF) is the electron acceptor that transfers electrons to the main mitochondrial respiratory chain via ETF-ubiquinone oxidoreductase (ETF dehydrogenase). Among the different mitochondrial acyl-CoA dehydrogenases, medium-chain specific acyl-CoA dehydrogenase acts specifically on acyl-CoAs with saturated 6 to 12 carbons long primary chains.</text>
</comment>
<comment type="catalytic activity">
    <reaction evidence="2">
        <text>a medium-chain 2,3-saturated fatty acyl-CoA + oxidized [electron-transfer flavoprotein] + H(+) = a medium-chain (2E)-enoyl-CoA + reduced [electron-transfer flavoprotein]</text>
        <dbReference type="Rhea" id="RHEA:14477"/>
        <dbReference type="Rhea" id="RHEA-COMP:10685"/>
        <dbReference type="Rhea" id="RHEA-COMP:10686"/>
        <dbReference type="ChEBI" id="CHEBI:15378"/>
        <dbReference type="ChEBI" id="CHEBI:57692"/>
        <dbReference type="ChEBI" id="CHEBI:58307"/>
        <dbReference type="ChEBI" id="CHEBI:83723"/>
        <dbReference type="ChEBI" id="CHEBI:83726"/>
        <dbReference type="EC" id="1.3.8.7"/>
    </reaction>
    <physiologicalReaction direction="left-to-right" evidence="2">
        <dbReference type="Rhea" id="RHEA:14478"/>
    </physiologicalReaction>
</comment>
<comment type="catalytic activity">
    <reaction evidence="1">
        <text>pentanoyl-CoA + oxidized [electron-transfer flavoprotein] + H(+) = (2E)-pentenoyl-CoA + reduced [electron-transfer flavoprotein]</text>
        <dbReference type="Rhea" id="RHEA:43456"/>
        <dbReference type="Rhea" id="RHEA-COMP:10685"/>
        <dbReference type="Rhea" id="RHEA-COMP:10686"/>
        <dbReference type="ChEBI" id="CHEBI:15378"/>
        <dbReference type="ChEBI" id="CHEBI:57389"/>
        <dbReference type="ChEBI" id="CHEBI:57692"/>
        <dbReference type="ChEBI" id="CHEBI:58307"/>
        <dbReference type="ChEBI" id="CHEBI:86160"/>
    </reaction>
    <physiologicalReaction direction="left-to-right" evidence="1">
        <dbReference type="Rhea" id="RHEA:43457"/>
    </physiologicalReaction>
</comment>
<comment type="catalytic activity">
    <reaction evidence="2">
        <text>hexanoyl-CoA + oxidized [electron-transfer flavoprotein] + H(+) = (2E)-hexenoyl-CoA + reduced [electron-transfer flavoprotein]</text>
        <dbReference type="Rhea" id="RHEA:43464"/>
        <dbReference type="Rhea" id="RHEA-COMP:10685"/>
        <dbReference type="Rhea" id="RHEA-COMP:10686"/>
        <dbReference type="ChEBI" id="CHEBI:15378"/>
        <dbReference type="ChEBI" id="CHEBI:57692"/>
        <dbReference type="ChEBI" id="CHEBI:58307"/>
        <dbReference type="ChEBI" id="CHEBI:62077"/>
        <dbReference type="ChEBI" id="CHEBI:62620"/>
    </reaction>
    <physiologicalReaction direction="left-to-right" evidence="2">
        <dbReference type="Rhea" id="RHEA:43465"/>
    </physiologicalReaction>
</comment>
<comment type="catalytic activity">
    <reaction evidence="2">
        <text>octanoyl-CoA + oxidized [electron-transfer flavoprotein] + H(+) = (2E)-octenoyl-CoA + reduced [electron-transfer flavoprotein]</text>
        <dbReference type="Rhea" id="RHEA:48180"/>
        <dbReference type="Rhea" id="RHEA-COMP:10685"/>
        <dbReference type="Rhea" id="RHEA-COMP:10686"/>
        <dbReference type="ChEBI" id="CHEBI:15378"/>
        <dbReference type="ChEBI" id="CHEBI:57386"/>
        <dbReference type="ChEBI" id="CHEBI:57692"/>
        <dbReference type="ChEBI" id="CHEBI:58307"/>
        <dbReference type="ChEBI" id="CHEBI:62242"/>
    </reaction>
    <physiologicalReaction direction="left-to-right" evidence="2">
        <dbReference type="Rhea" id="RHEA:48181"/>
    </physiologicalReaction>
</comment>
<comment type="catalytic activity">
    <reaction evidence="2">
        <text>decanoyl-CoA + oxidized [electron-transfer flavoprotein] + H(+) = (2E)-decenoyl-CoA + reduced [electron-transfer flavoprotein]</text>
        <dbReference type="Rhea" id="RHEA:48176"/>
        <dbReference type="Rhea" id="RHEA-COMP:10685"/>
        <dbReference type="Rhea" id="RHEA-COMP:10686"/>
        <dbReference type="ChEBI" id="CHEBI:15378"/>
        <dbReference type="ChEBI" id="CHEBI:57692"/>
        <dbReference type="ChEBI" id="CHEBI:58307"/>
        <dbReference type="ChEBI" id="CHEBI:61406"/>
        <dbReference type="ChEBI" id="CHEBI:61430"/>
    </reaction>
    <physiologicalReaction direction="left-to-right" evidence="2">
        <dbReference type="Rhea" id="RHEA:48177"/>
    </physiologicalReaction>
</comment>
<comment type="catalytic activity">
    <reaction evidence="2">
        <text>dodecanoyl-CoA + oxidized [electron-transfer flavoprotein] + H(+) = (2E)-dodecenoyl-CoA + reduced [electron-transfer flavoprotein]</text>
        <dbReference type="Rhea" id="RHEA:47296"/>
        <dbReference type="Rhea" id="RHEA-COMP:10685"/>
        <dbReference type="Rhea" id="RHEA-COMP:10686"/>
        <dbReference type="ChEBI" id="CHEBI:15378"/>
        <dbReference type="ChEBI" id="CHEBI:57330"/>
        <dbReference type="ChEBI" id="CHEBI:57375"/>
        <dbReference type="ChEBI" id="CHEBI:57692"/>
        <dbReference type="ChEBI" id="CHEBI:58307"/>
    </reaction>
    <physiologicalReaction direction="left-to-right" evidence="2">
        <dbReference type="Rhea" id="RHEA:47297"/>
    </physiologicalReaction>
</comment>
<comment type="catalytic activity">
    <reaction evidence="2">
        <text>tetradecanoyl-CoA + oxidized [electron-transfer flavoprotein] + H(+) = (2E)-tetradecenoyl-CoA + reduced [electron-transfer flavoprotein]</text>
        <dbReference type="Rhea" id="RHEA:47316"/>
        <dbReference type="Rhea" id="RHEA-COMP:10685"/>
        <dbReference type="Rhea" id="RHEA-COMP:10686"/>
        <dbReference type="ChEBI" id="CHEBI:15378"/>
        <dbReference type="ChEBI" id="CHEBI:57385"/>
        <dbReference type="ChEBI" id="CHEBI:57692"/>
        <dbReference type="ChEBI" id="CHEBI:58307"/>
        <dbReference type="ChEBI" id="CHEBI:61405"/>
    </reaction>
    <physiologicalReaction direction="left-to-right" evidence="2">
        <dbReference type="Rhea" id="RHEA:47317"/>
    </physiologicalReaction>
</comment>
<comment type="catalytic activity">
    <reaction evidence="2">
        <text>oxidized [electron-transfer flavoprotein] + hexadecanoyl-CoA + H(+) = (2E)-hexadecenoyl-CoA + reduced [electron-transfer flavoprotein]</text>
        <dbReference type="Rhea" id="RHEA:43448"/>
        <dbReference type="Rhea" id="RHEA-COMP:10685"/>
        <dbReference type="Rhea" id="RHEA-COMP:10686"/>
        <dbReference type="ChEBI" id="CHEBI:15378"/>
        <dbReference type="ChEBI" id="CHEBI:57379"/>
        <dbReference type="ChEBI" id="CHEBI:57692"/>
        <dbReference type="ChEBI" id="CHEBI:58307"/>
        <dbReference type="ChEBI" id="CHEBI:61526"/>
    </reaction>
    <physiologicalReaction direction="left-to-right" evidence="2">
        <dbReference type="Rhea" id="RHEA:43449"/>
    </physiologicalReaction>
</comment>
<comment type="cofactor">
    <cofactor evidence="2">
        <name>FAD</name>
        <dbReference type="ChEBI" id="CHEBI:57692"/>
    </cofactor>
</comment>
<comment type="pathway">
    <text evidence="2">Lipid metabolism; mitochondrial fatty acid beta-oxidation.</text>
</comment>
<comment type="subunit">
    <text evidence="2">Homotetramer. Interacts with the heterodimeric electron transfer flavoprotein ETF.</text>
</comment>
<comment type="subcellular location">
    <subcellularLocation>
        <location evidence="1">Mitochondrion matrix</location>
    </subcellularLocation>
</comment>
<comment type="PTM">
    <text evidence="2">Acetylated. Could occur at proximity of the cofactor-binding sites and reduce the catalytic activity. Could be deacetylated by SIRT3.</text>
</comment>
<comment type="similarity">
    <text evidence="6">Belongs to the acyl-CoA dehydrogenase family.</text>
</comment>